<name>MGSA_BURMA</name>
<proteinExistence type="inferred from homology"/>
<protein>
    <recommendedName>
        <fullName evidence="1">Methylglyoxal synthase</fullName>
        <shortName evidence="1">MGS</shortName>
        <ecNumber evidence="1">4.2.3.3</ecNumber>
    </recommendedName>
</protein>
<reference key="1">
    <citation type="journal article" date="2004" name="Proc. Natl. Acad. Sci. U.S.A.">
        <title>Structural flexibility in the Burkholderia mallei genome.</title>
        <authorList>
            <person name="Nierman W.C."/>
            <person name="DeShazer D."/>
            <person name="Kim H.S."/>
            <person name="Tettelin H."/>
            <person name="Nelson K.E."/>
            <person name="Feldblyum T.V."/>
            <person name="Ulrich R.L."/>
            <person name="Ronning C.M."/>
            <person name="Brinkac L.M."/>
            <person name="Daugherty S.C."/>
            <person name="Davidsen T.D."/>
            <person name="DeBoy R.T."/>
            <person name="Dimitrov G."/>
            <person name="Dodson R.J."/>
            <person name="Durkin A.S."/>
            <person name="Gwinn M.L."/>
            <person name="Haft D.H."/>
            <person name="Khouri H.M."/>
            <person name="Kolonay J.F."/>
            <person name="Madupu R."/>
            <person name="Mohammoud Y."/>
            <person name="Nelson W.C."/>
            <person name="Radune D."/>
            <person name="Romero C.M."/>
            <person name="Sarria S."/>
            <person name="Selengut J."/>
            <person name="Shamblin C."/>
            <person name="Sullivan S.A."/>
            <person name="White O."/>
            <person name="Yu Y."/>
            <person name="Zafar N."/>
            <person name="Zhou L."/>
            <person name="Fraser C.M."/>
        </authorList>
    </citation>
    <scope>NUCLEOTIDE SEQUENCE [LARGE SCALE GENOMIC DNA]</scope>
    <source>
        <strain>ATCC 23344</strain>
    </source>
</reference>
<sequence length="130" mass="13654">MSTPRIALIAHDAKKDDIVALAGAYRATLAQCRLVATGTTGGRIAQAHGLDVERKLSGPLGGDLQIGAELADGRVDIVIFLRDPMTAQPHDPDITALVRACDVHDVPVATNVATARVLLDDLARRLTANA</sequence>
<dbReference type="EC" id="4.2.3.3" evidence="1"/>
<dbReference type="EMBL" id="CP000010">
    <property type="protein sequence ID" value="AAU49440.1"/>
    <property type="molecule type" value="Genomic_DNA"/>
</dbReference>
<dbReference type="RefSeq" id="WP_004186317.1">
    <property type="nucleotide sequence ID" value="NC_006348.1"/>
</dbReference>
<dbReference type="RefSeq" id="YP_103477.1">
    <property type="nucleotide sequence ID" value="NC_006348.1"/>
</dbReference>
<dbReference type="SMR" id="Q62IJ3"/>
<dbReference type="KEGG" id="bma:BMA1881"/>
<dbReference type="PATRIC" id="fig|243160.12.peg.1922"/>
<dbReference type="eggNOG" id="COG1803">
    <property type="taxonomic scope" value="Bacteria"/>
</dbReference>
<dbReference type="HOGENOM" id="CLU_120420_1_0_4"/>
<dbReference type="Proteomes" id="UP000006693">
    <property type="component" value="Chromosome 1"/>
</dbReference>
<dbReference type="GO" id="GO:0005829">
    <property type="term" value="C:cytosol"/>
    <property type="evidence" value="ECO:0007669"/>
    <property type="project" value="TreeGrafter"/>
</dbReference>
<dbReference type="GO" id="GO:0008929">
    <property type="term" value="F:methylglyoxal synthase activity"/>
    <property type="evidence" value="ECO:0007669"/>
    <property type="project" value="UniProtKB-UniRule"/>
</dbReference>
<dbReference type="GO" id="GO:0019242">
    <property type="term" value="P:methylglyoxal biosynthetic process"/>
    <property type="evidence" value="ECO:0007669"/>
    <property type="project" value="UniProtKB-UniRule"/>
</dbReference>
<dbReference type="CDD" id="cd01422">
    <property type="entry name" value="MGS"/>
    <property type="match status" value="1"/>
</dbReference>
<dbReference type="Gene3D" id="3.40.50.1380">
    <property type="entry name" value="Methylglyoxal synthase-like domain"/>
    <property type="match status" value="1"/>
</dbReference>
<dbReference type="HAMAP" id="MF_00549">
    <property type="entry name" value="Methylglyoxal_synth"/>
    <property type="match status" value="1"/>
</dbReference>
<dbReference type="InterPro" id="IPR004363">
    <property type="entry name" value="Methylgl_synth"/>
</dbReference>
<dbReference type="InterPro" id="IPR018148">
    <property type="entry name" value="Methylglyoxal_synth_AS"/>
</dbReference>
<dbReference type="InterPro" id="IPR011607">
    <property type="entry name" value="MGS-like_dom"/>
</dbReference>
<dbReference type="InterPro" id="IPR036914">
    <property type="entry name" value="MGS-like_dom_sf"/>
</dbReference>
<dbReference type="NCBIfam" id="TIGR00160">
    <property type="entry name" value="MGSA"/>
    <property type="match status" value="1"/>
</dbReference>
<dbReference type="NCBIfam" id="NF003559">
    <property type="entry name" value="PRK05234.1"/>
    <property type="match status" value="1"/>
</dbReference>
<dbReference type="PANTHER" id="PTHR30492">
    <property type="entry name" value="METHYLGLYOXAL SYNTHASE"/>
    <property type="match status" value="1"/>
</dbReference>
<dbReference type="PANTHER" id="PTHR30492:SF0">
    <property type="entry name" value="METHYLGLYOXAL SYNTHASE"/>
    <property type="match status" value="1"/>
</dbReference>
<dbReference type="Pfam" id="PF02142">
    <property type="entry name" value="MGS"/>
    <property type="match status" value="1"/>
</dbReference>
<dbReference type="PIRSF" id="PIRSF006614">
    <property type="entry name" value="Methylglyox_syn"/>
    <property type="match status" value="1"/>
</dbReference>
<dbReference type="SMART" id="SM00851">
    <property type="entry name" value="MGS"/>
    <property type="match status" value="1"/>
</dbReference>
<dbReference type="SUPFAM" id="SSF52335">
    <property type="entry name" value="Methylglyoxal synthase-like"/>
    <property type="match status" value="1"/>
</dbReference>
<dbReference type="PROSITE" id="PS01335">
    <property type="entry name" value="METHYLGLYOXAL_SYNTH"/>
    <property type="match status" value="1"/>
</dbReference>
<dbReference type="PROSITE" id="PS51855">
    <property type="entry name" value="MGS"/>
    <property type="match status" value="1"/>
</dbReference>
<accession>Q62IJ3</accession>
<comment type="function">
    <text evidence="1">Catalyzes the formation of methylglyoxal from dihydroxyacetone phosphate.</text>
</comment>
<comment type="catalytic activity">
    <reaction evidence="1">
        <text>dihydroxyacetone phosphate = methylglyoxal + phosphate</text>
        <dbReference type="Rhea" id="RHEA:17937"/>
        <dbReference type="ChEBI" id="CHEBI:17158"/>
        <dbReference type="ChEBI" id="CHEBI:43474"/>
        <dbReference type="ChEBI" id="CHEBI:57642"/>
        <dbReference type="EC" id="4.2.3.3"/>
    </reaction>
</comment>
<comment type="similarity">
    <text evidence="1">Belongs to the methylglyoxal synthase family.</text>
</comment>
<gene>
    <name evidence="1" type="primary">mgsA</name>
    <name type="ordered locus">BMA1881</name>
</gene>
<evidence type="ECO:0000255" key="1">
    <source>
        <dbReference type="HAMAP-Rule" id="MF_00549"/>
    </source>
</evidence>
<organism>
    <name type="scientific">Burkholderia mallei (strain ATCC 23344)</name>
    <dbReference type="NCBI Taxonomy" id="243160"/>
    <lineage>
        <taxon>Bacteria</taxon>
        <taxon>Pseudomonadati</taxon>
        <taxon>Pseudomonadota</taxon>
        <taxon>Betaproteobacteria</taxon>
        <taxon>Burkholderiales</taxon>
        <taxon>Burkholderiaceae</taxon>
        <taxon>Burkholderia</taxon>
        <taxon>pseudomallei group</taxon>
    </lineage>
</organism>
<feature type="chain" id="PRO_0000178619" description="Methylglyoxal synthase">
    <location>
        <begin position="1"/>
        <end position="130"/>
    </location>
</feature>
<feature type="domain" description="MGS-like" evidence="1">
    <location>
        <begin position="1"/>
        <end position="130"/>
    </location>
</feature>
<feature type="active site" description="Proton donor/acceptor" evidence="1">
    <location>
        <position position="63"/>
    </location>
</feature>
<feature type="binding site" evidence="1">
    <location>
        <position position="11"/>
    </location>
    <ligand>
        <name>substrate</name>
    </ligand>
</feature>
<feature type="binding site" evidence="1">
    <location>
        <position position="15"/>
    </location>
    <ligand>
        <name>substrate</name>
    </ligand>
</feature>
<feature type="binding site" evidence="1">
    <location>
        <begin position="37"/>
        <end position="40"/>
    </location>
    <ligand>
        <name>substrate</name>
    </ligand>
</feature>
<feature type="binding site" evidence="1">
    <location>
        <begin position="57"/>
        <end position="58"/>
    </location>
    <ligand>
        <name>substrate</name>
    </ligand>
</feature>
<feature type="binding site" evidence="1">
    <location>
        <position position="90"/>
    </location>
    <ligand>
        <name>substrate</name>
    </ligand>
</feature>
<keyword id="KW-0456">Lyase</keyword>
<keyword id="KW-1185">Reference proteome</keyword>